<gene>
    <name type="ordered locus">NGR_a01200</name>
    <name type="ORF">y4vD</name>
</gene>
<organism>
    <name type="scientific">Sinorhizobium fredii (strain NBRC 101917 / NGR234)</name>
    <dbReference type="NCBI Taxonomy" id="394"/>
    <lineage>
        <taxon>Bacteria</taxon>
        <taxon>Pseudomonadati</taxon>
        <taxon>Pseudomonadota</taxon>
        <taxon>Alphaproteobacteria</taxon>
        <taxon>Hyphomicrobiales</taxon>
        <taxon>Rhizobiaceae</taxon>
        <taxon>Sinorhizobium/Ensifer group</taxon>
        <taxon>Sinorhizobium</taxon>
    </lineage>
</organism>
<geneLocation type="plasmid">
    <name>sym pNGR234a</name>
</geneLocation>
<feature type="chain" id="PRO_0000056613" description="Peroxiredoxin y4vD">
    <location>
        <begin position="1"/>
        <end position="188"/>
    </location>
</feature>
<feature type="domain" description="Thioredoxin" evidence="3">
    <location>
        <begin position="2"/>
        <end position="152"/>
    </location>
</feature>
<feature type="active site" description="Cysteine sulfenic acid (-SOH) intermediate (for peroxiredoxin activity)" evidence="2">
    <location>
        <position position="56"/>
    </location>
</feature>
<dbReference type="EC" id="1.11.1.27" evidence="2"/>
<dbReference type="EMBL" id="Z68203">
    <property type="protein sequence ID" value="CAA92419.1"/>
    <property type="molecule type" value="Genomic_DNA"/>
</dbReference>
<dbReference type="EMBL" id="U00090">
    <property type="protein sequence ID" value="AAB91892.1"/>
    <property type="molecule type" value="Genomic_DNA"/>
</dbReference>
<dbReference type="RefSeq" id="NP_444105.1">
    <property type="nucleotide sequence ID" value="NC_000914.2"/>
</dbReference>
<dbReference type="RefSeq" id="WP_010875158.1">
    <property type="nucleotide sequence ID" value="NC_000914.2"/>
</dbReference>
<dbReference type="SMR" id="Q53212"/>
<dbReference type="STRING" id="394.NGR_c24970"/>
<dbReference type="KEGG" id="rhi:NGR_a01200"/>
<dbReference type="PATRIC" id="fig|394.7.peg.104"/>
<dbReference type="eggNOG" id="COG0678">
    <property type="taxonomic scope" value="Bacteria"/>
</dbReference>
<dbReference type="HOGENOM" id="CLU_072440_2_0_5"/>
<dbReference type="OrthoDB" id="9800621at2"/>
<dbReference type="Proteomes" id="UP000001054">
    <property type="component" value="Plasmid pNGR234a"/>
</dbReference>
<dbReference type="GO" id="GO:0005737">
    <property type="term" value="C:cytoplasm"/>
    <property type="evidence" value="ECO:0007669"/>
    <property type="project" value="TreeGrafter"/>
</dbReference>
<dbReference type="GO" id="GO:0008379">
    <property type="term" value="F:thioredoxin peroxidase activity"/>
    <property type="evidence" value="ECO:0007669"/>
    <property type="project" value="InterPro"/>
</dbReference>
<dbReference type="GO" id="GO:0045454">
    <property type="term" value="P:cell redox homeostasis"/>
    <property type="evidence" value="ECO:0007669"/>
    <property type="project" value="TreeGrafter"/>
</dbReference>
<dbReference type="GO" id="GO:0034599">
    <property type="term" value="P:cellular response to oxidative stress"/>
    <property type="evidence" value="ECO:0007669"/>
    <property type="project" value="InterPro"/>
</dbReference>
<dbReference type="GO" id="GO:0042744">
    <property type="term" value="P:hydrogen peroxide catabolic process"/>
    <property type="evidence" value="ECO:0007669"/>
    <property type="project" value="TreeGrafter"/>
</dbReference>
<dbReference type="CDD" id="cd03013">
    <property type="entry name" value="PRX5_like"/>
    <property type="match status" value="1"/>
</dbReference>
<dbReference type="Gene3D" id="3.40.30.10">
    <property type="entry name" value="Glutaredoxin"/>
    <property type="match status" value="1"/>
</dbReference>
<dbReference type="InterPro" id="IPR037944">
    <property type="entry name" value="PRX5-like"/>
</dbReference>
<dbReference type="InterPro" id="IPR013740">
    <property type="entry name" value="Redoxin"/>
</dbReference>
<dbReference type="InterPro" id="IPR036249">
    <property type="entry name" value="Thioredoxin-like_sf"/>
</dbReference>
<dbReference type="InterPro" id="IPR013766">
    <property type="entry name" value="Thioredoxin_domain"/>
</dbReference>
<dbReference type="PANTHER" id="PTHR10430">
    <property type="entry name" value="PEROXIREDOXIN"/>
    <property type="match status" value="1"/>
</dbReference>
<dbReference type="PANTHER" id="PTHR10430:SF16">
    <property type="entry name" value="PEROXIREDOXIN-5, MITOCHONDRIAL"/>
    <property type="match status" value="1"/>
</dbReference>
<dbReference type="Pfam" id="PF08534">
    <property type="entry name" value="Redoxin"/>
    <property type="match status" value="1"/>
</dbReference>
<dbReference type="SUPFAM" id="SSF52833">
    <property type="entry name" value="Thioredoxin-like"/>
    <property type="match status" value="1"/>
</dbReference>
<dbReference type="PROSITE" id="PS51352">
    <property type="entry name" value="THIOREDOXIN_2"/>
    <property type="match status" value="1"/>
</dbReference>
<protein>
    <recommendedName>
        <fullName>Peroxiredoxin y4vD</fullName>
        <shortName>Prx</shortName>
        <ecNumber evidence="2">1.11.1.27</ecNumber>
    </recommendedName>
    <alternativeName>
        <fullName evidence="4">Glutathione-dependent peroxiredoxin</fullName>
    </alternativeName>
</protein>
<reference key="1">
    <citation type="journal article" date="1996" name="Genome Res.">
        <title>Sequencing the 500-kb GC-rich symbiotic replicon of Rhizobium sp. NGR234 using dye terminators and a thermostable 'sequenase': a beginning.</title>
        <authorList>
            <person name="Freiberg C."/>
            <person name="Perret X."/>
            <person name="Broughton W.J."/>
            <person name="Rosenthal A."/>
        </authorList>
    </citation>
    <scope>NUCLEOTIDE SEQUENCE [GENOMIC DNA]</scope>
</reference>
<reference key="2">
    <citation type="journal article" date="1997" name="Nature">
        <title>Molecular basis of symbiosis between Rhizobium and legumes.</title>
        <authorList>
            <person name="Freiberg C.A."/>
            <person name="Fellay R."/>
            <person name="Bairoch A."/>
            <person name="Broughton W.J."/>
            <person name="Rosenthal A."/>
            <person name="Perret X."/>
        </authorList>
    </citation>
    <scope>NUCLEOTIDE SEQUENCE [LARGE SCALE GENOMIC DNA]</scope>
    <source>
        <strain>NBRC 101917 / NGR234</strain>
    </source>
</reference>
<reference key="3">
    <citation type="journal article" date="2009" name="Appl. Environ. Microbiol.">
        <title>Rhizobium sp. strain NGR234 possesses a remarkable number of secretion systems.</title>
        <authorList>
            <person name="Schmeisser C."/>
            <person name="Liesegang H."/>
            <person name="Krysciak D."/>
            <person name="Bakkou N."/>
            <person name="Le Quere A."/>
            <person name="Wollherr A."/>
            <person name="Heinemeyer I."/>
            <person name="Morgenstern B."/>
            <person name="Pommerening-Roeser A."/>
            <person name="Flores M."/>
            <person name="Palacios R."/>
            <person name="Brenner S."/>
            <person name="Gottschalk G."/>
            <person name="Schmitz R.A."/>
            <person name="Broughton W.J."/>
            <person name="Perret X."/>
            <person name="Strittmatter A.W."/>
            <person name="Streit W.R."/>
        </authorList>
    </citation>
    <scope>NUCLEOTIDE SEQUENCE [LARGE SCALE GENOMIC DNA]</scope>
    <source>
        <strain>NBRC 101917 / NGR234</strain>
    </source>
</reference>
<accession>Q53212</accession>
<comment type="function">
    <text evidence="2">Thiol-specific peroxidase that catalyzes the reduction of hydrogen peroxide and organic hydroperoxides to water and alcohols, respectively. Plays a role in cell protection against oxidative stress by detoxifying peroxides.</text>
</comment>
<comment type="catalytic activity">
    <reaction evidence="2">
        <text>a hydroperoxide + 2 glutathione = an alcohol + glutathione disulfide + H2O</text>
        <dbReference type="Rhea" id="RHEA:62632"/>
        <dbReference type="ChEBI" id="CHEBI:15377"/>
        <dbReference type="ChEBI" id="CHEBI:30879"/>
        <dbReference type="ChEBI" id="CHEBI:35924"/>
        <dbReference type="ChEBI" id="CHEBI:57925"/>
        <dbReference type="ChEBI" id="CHEBI:58297"/>
        <dbReference type="EC" id="1.11.1.27"/>
    </reaction>
</comment>
<comment type="subunit">
    <text evidence="1">Monomer.</text>
</comment>
<comment type="miscellaneous">
    <text evidence="1">The active site is a conserved redox-active cysteine residue, the peroxidatic cysteine (C(P)), which makes the nucleophilic attack on the peroxide substrate. The peroxide oxidizes the C(P)-SH to cysteine sulfenic acid (C(P)-SOH), which then reacts with another cysteine residue, the resolving cysteine (C(R)), to form a disulfide bridge. The disulfide is subsequently reduced by an appropriate electron donor to complete the catalytic cycle. In this 1-Cys peroxiredoxin, no C(R) is present and C(P) instead forms a disulfide with a cysteine from another protein or with a small thiol molecule.</text>
</comment>
<comment type="similarity">
    <text evidence="4">Belongs to the peroxiredoxin family. Prx5 subfamily.</text>
</comment>
<keyword id="KW-0049">Antioxidant</keyword>
<keyword id="KW-0560">Oxidoreductase</keyword>
<keyword id="KW-0575">Peroxidase</keyword>
<keyword id="KW-0614">Plasmid</keyword>
<keyword id="KW-0676">Redox-active center</keyword>
<keyword id="KW-1185">Reference proteome</keyword>
<evidence type="ECO:0000250" key="1">
    <source>
        <dbReference type="UniProtKB" id="A9PCL4"/>
    </source>
</evidence>
<evidence type="ECO:0000250" key="2">
    <source>
        <dbReference type="UniProtKB" id="P44758"/>
    </source>
</evidence>
<evidence type="ECO:0000255" key="3">
    <source>
        <dbReference type="PROSITE-ProRule" id="PRU00691"/>
    </source>
</evidence>
<evidence type="ECO:0000305" key="4"/>
<proteinExistence type="inferred from homology"/>
<name>PRX5_SINFN</name>
<sequence>MPVKKRVPFVAFRTRVRDETIGGPNPYRWEVRTTEDYFSGKRVVLFSLPGAFTPTCSTQQLPDFERLYDEFGKVGIEAVYCLSVNDAFVMNAWGKALGLEKVRLIPDGSGEFTRKMGMLVAKDNLGFGMRSWRYAAVVNDSVVEQWFEEEGFSDNCESDPYWASSPQNILETLRTFDTARLGRVPIKF</sequence>